<reference key="1">
    <citation type="submission" date="2006-03" db="EMBL/GenBank/DDBJ databases">
        <title>Complete sequence of chromosome of Psychrobacter cryohalolentis K5.</title>
        <authorList>
            <consortium name="US DOE Joint Genome Institute"/>
            <person name="Copeland A."/>
            <person name="Lucas S."/>
            <person name="Lapidus A."/>
            <person name="Barry K."/>
            <person name="Detter J.C."/>
            <person name="Glavina T."/>
            <person name="Hammon N."/>
            <person name="Israni S."/>
            <person name="Dalin E."/>
            <person name="Tice H."/>
            <person name="Pitluck S."/>
            <person name="Brettin T."/>
            <person name="Bruce D."/>
            <person name="Han C."/>
            <person name="Tapia R."/>
            <person name="Sims D.R."/>
            <person name="Gilna P."/>
            <person name="Schmutz J."/>
            <person name="Larimer F."/>
            <person name="Land M."/>
            <person name="Hauser L."/>
            <person name="Kyrpides N."/>
            <person name="Kim E."/>
            <person name="Richardson P."/>
        </authorList>
    </citation>
    <scope>NUCLEOTIDE SEQUENCE [LARGE SCALE GENOMIC DNA]</scope>
    <source>
        <strain>ATCC BAA-1226 / DSM 17306 / VKM B-2378 / K5</strain>
    </source>
</reference>
<evidence type="ECO:0000255" key="1">
    <source>
        <dbReference type="HAMAP-Rule" id="MF_01595"/>
    </source>
</evidence>
<comment type="function">
    <text evidence="1">Involved in mRNA degradation. Catalyzes the phosphorolysis of single-stranded polyribonucleotides processively in the 3'- to 5'-direction.</text>
</comment>
<comment type="catalytic activity">
    <reaction evidence="1">
        <text>RNA(n+1) + phosphate = RNA(n) + a ribonucleoside 5'-diphosphate</text>
        <dbReference type="Rhea" id="RHEA:22096"/>
        <dbReference type="Rhea" id="RHEA-COMP:14527"/>
        <dbReference type="Rhea" id="RHEA-COMP:17342"/>
        <dbReference type="ChEBI" id="CHEBI:43474"/>
        <dbReference type="ChEBI" id="CHEBI:57930"/>
        <dbReference type="ChEBI" id="CHEBI:140395"/>
        <dbReference type="EC" id="2.7.7.8"/>
    </reaction>
</comment>
<comment type="cofactor">
    <cofactor evidence="1">
        <name>Mg(2+)</name>
        <dbReference type="ChEBI" id="CHEBI:18420"/>
    </cofactor>
</comment>
<comment type="subunit">
    <text evidence="1">Component of the RNA degradosome, which is a multiprotein complex involved in RNA processing and mRNA degradation.</text>
</comment>
<comment type="subcellular location">
    <subcellularLocation>
        <location evidence="1">Cytoplasm</location>
    </subcellularLocation>
</comment>
<comment type="similarity">
    <text evidence="1">Belongs to the polyribonucleotide nucleotidyltransferase family.</text>
</comment>
<feature type="chain" id="PRO_0000329791" description="Polyribonucleotide nucleotidyltransferase">
    <location>
        <begin position="1"/>
        <end position="700"/>
    </location>
</feature>
<feature type="domain" description="KH" evidence="1">
    <location>
        <begin position="558"/>
        <end position="617"/>
    </location>
</feature>
<feature type="domain" description="S1 motif" evidence="1">
    <location>
        <begin position="627"/>
        <end position="695"/>
    </location>
</feature>
<feature type="binding site" evidence="1">
    <location>
        <position position="491"/>
    </location>
    <ligand>
        <name>Mg(2+)</name>
        <dbReference type="ChEBI" id="CHEBI:18420"/>
    </ligand>
</feature>
<feature type="binding site" evidence="1">
    <location>
        <position position="497"/>
    </location>
    <ligand>
        <name>Mg(2+)</name>
        <dbReference type="ChEBI" id="CHEBI:18420"/>
    </ligand>
</feature>
<dbReference type="EC" id="2.7.7.8" evidence="1"/>
<dbReference type="EMBL" id="CP000323">
    <property type="protein sequence ID" value="ABE73864.1"/>
    <property type="molecule type" value="Genomic_DNA"/>
</dbReference>
<dbReference type="RefSeq" id="WP_011512455.1">
    <property type="nucleotide sequence ID" value="NC_007969.1"/>
</dbReference>
<dbReference type="SMR" id="Q1QEN9"/>
<dbReference type="STRING" id="335284.Pcryo_0080"/>
<dbReference type="KEGG" id="pcr:Pcryo_0080"/>
<dbReference type="eggNOG" id="COG1185">
    <property type="taxonomic scope" value="Bacteria"/>
</dbReference>
<dbReference type="HOGENOM" id="CLU_004217_2_2_6"/>
<dbReference type="Proteomes" id="UP000002425">
    <property type="component" value="Chromosome"/>
</dbReference>
<dbReference type="GO" id="GO:0005829">
    <property type="term" value="C:cytosol"/>
    <property type="evidence" value="ECO:0007669"/>
    <property type="project" value="TreeGrafter"/>
</dbReference>
<dbReference type="GO" id="GO:0000175">
    <property type="term" value="F:3'-5'-RNA exonuclease activity"/>
    <property type="evidence" value="ECO:0007669"/>
    <property type="project" value="TreeGrafter"/>
</dbReference>
<dbReference type="GO" id="GO:0000287">
    <property type="term" value="F:magnesium ion binding"/>
    <property type="evidence" value="ECO:0007669"/>
    <property type="project" value="UniProtKB-UniRule"/>
</dbReference>
<dbReference type="GO" id="GO:0004654">
    <property type="term" value="F:polyribonucleotide nucleotidyltransferase activity"/>
    <property type="evidence" value="ECO:0007669"/>
    <property type="project" value="UniProtKB-UniRule"/>
</dbReference>
<dbReference type="GO" id="GO:0003723">
    <property type="term" value="F:RNA binding"/>
    <property type="evidence" value="ECO:0007669"/>
    <property type="project" value="UniProtKB-UniRule"/>
</dbReference>
<dbReference type="GO" id="GO:0006402">
    <property type="term" value="P:mRNA catabolic process"/>
    <property type="evidence" value="ECO:0007669"/>
    <property type="project" value="UniProtKB-UniRule"/>
</dbReference>
<dbReference type="GO" id="GO:0006396">
    <property type="term" value="P:RNA processing"/>
    <property type="evidence" value="ECO:0007669"/>
    <property type="project" value="InterPro"/>
</dbReference>
<dbReference type="CDD" id="cd02393">
    <property type="entry name" value="KH-I_PNPase"/>
    <property type="match status" value="1"/>
</dbReference>
<dbReference type="CDD" id="cd11363">
    <property type="entry name" value="RNase_PH_PNPase_1"/>
    <property type="match status" value="1"/>
</dbReference>
<dbReference type="CDD" id="cd11364">
    <property type="entry name" value="RNase_PH_PNPase_2"/>
    <property type="match status" value="1"/>
</dbReference>
<dbReference type="CDD" id="cd04472">
    <property type="entry name" value="S1_PNPase"/>
    <property type="match status" value="1"/>
</dbReference>
<dbReference type="FunFam" id="2.40.50.140:FF:000023">
    <property type="entry name" value="Polyribonucleotide nucleotidyltransferase"/>
    <property type="match status" value="1"/>
</dbReference>
<dbReference type="FunFam" id="3.30.1370.10:FF:000001">
    <property type="entry name" value="Polyribonucleotide nucleotidyltransferase"/>
    <property type="match status" value="1"/>
</dbReference>
<dbReference type="FunFam" id="3.30.230.70:FF:000001">
    <property type="entry name" value="Polyribonucleotide nucleotidyltransferase"/>
    <property type="match status" value="1"/>
</dbReference>
<dbReference type="FunFam" id="3.30.230.70:FF:000002">
    <property type="entry name" value="Polyribonucleotide nucleotidyltransferase"/>
    <property type="match status" value="1"/>
</dbReference>
<dbReference type="Gene3D" id="3.30.230.70">
    <property type="entry name" value="GHMP Kinase, N-terminal domain"/>
    <property type="match status" value="2"/>
</dbReference>
<dbReference type="Gene3D" id="3.30.1370.10">
    <property type="entry name" value="K Homology domain, type 1"/>
    <property type="match status" value="1"/>
</dbReference>
<dbReference type="Gene3D" id="2.40.50.140">
    <property type="entry name" value="Nucleic acid-binding proteins"/>
    <property type="match status" value="1"/>
</dbReference>
<dbReference type="HAMAP" id="MF_01595">
    <property type="entry name" value="PNPase"/>
    <property type="match status" value="1"/>
</dbReference>
<dbReference type="InterPro" id="IPR001247">
    <property type="entry name" value="ExoRNase_PH_dom1"/>
</dbReference>
<dbReference type="InterPro" id="IPR015847">
    <property type="entry name" value="ExoRNase_PH_dom2"/>
</dbReference>
<dbReference type="InterPro" id="IPR036345">
    <property type="entry name" value="ExoRNase_PH_dom2_sf"/>
</dbReference>
<dbReference type="InterPro" id="IPR004087">
    <property type="entry name" value="KH_dom"/>
</dbReference>
<dbReference type="InterPro" id="IPR004088">
    <property type="entry name" value="KH_dom_type_1"/>
</dbReference>
<dbReference type="InterPro" id="IPR036612">
    <property type="entry name" value="KH_dom_type_1_sf"/>
</dbReference>
<dbReference type="InterPro" id="IPR012340">
    <property type="entry name" value="NA-bd_OB-fold"/>
</dbReference>
<dbReference type="InterPro" id="IPR012162">
    <property type="entry name" value="PNPase"/>
</dbReference>
<dbReference type="InterPro" id="IPR027408">
    <property type="entry name" value="PNPase/RNase_PH_dom_sf"/>
</dbReference>
<dbReference type="InterPro" id="IPR015848">
    <property type="entry name" value="PNPase_PH_RNA-bd_bac/org-type"/>
</dbReference>
<dbReference type="InterPro" id="IPR020568">
    <property type="entry name" value="Ribosomal_Su5_D2-typ_SF"/>
</dbReference>
<dbReference type="InterPro" id="IPR003029">
    <property type="entry name" value="S1_domain"/>
</dbReference>
<dbReference type="NCBIfam" id="TIGR03591">
    <property type="entry name" value="polynuc_phos"/>
    <property type="match status" value="1"/>
</dbReference>
<dbReference type="NCBIfam" id="NF008805">
    <property type="entry name" value="PRK11824.1"/>
    <property type="match status" value="1"/>
</dbReference>
<dbReference type="PANTHER" id="PTHR11252">
    <property type="entry name" value="POLYRIBONUCLEOTIDE NUCLEOTIDYLTRANSFERASE"/>
    <property type="match status" value="1"/>
</dbReference>
<dbReference type="PANTHER" id="PTHR11252:SF0">
    <property type="entry name" value="POLYRIBONUCLEOTIDE NUCLEOTIDYLTRANSFERASE 1, MITOCHONDRIAL"/>
    <property type="match status" value="1"/>
</dbReference>
<dbReference type="Pfam" id="PF00013">
    <property type="entry name" value="KH_1"/>
    <property type="match status" value="1"/>
</dbReference>
<dbReference type="Pfam" id="PF03726">
    <property type="entry name" value="PNPase"/>
    <property type="match status" value="1"/>
</dbReference>
<dbReference type="Pfam" id="PF01138">
    <property type="entry name" value="RNase_PH"/>
    <property type="match status" value="2"/>
</dbReference>
<dbReference type="Pfam" id="PF03725">
    <property type="entry name" value="RNase_PH_C"/>
    <property type="match status" value="2"/>
</dbReference>
<dbReference type="Pfam" id="PF00575">
    <property type="entry name" value="S1"/>
    <property type="match status" value="1"/>
</dbReference>
<dbReference type="PIRSF" id="PIRSF005499">
    <property type="entry name" value="PNPase"/>
    <property type="match status" value="1"/>
</dbReference>
<dbReference type="SMART" id="SM00322">
    <property type="entry name" value="KH"/>
    <property type="match status" value="1"/>
</dbReference>
<dbReference type="SMART" id="SM00316">
    <property type="entry name" value="S1"/>
    <property type="match status" value="1"/>
</dbReference>
<dbReference type="SUPFAM" id="SSF54791">
    <property type="entry name" value="Eukaryotic type KH-domain (KH-domain type I)"/>
    <property type="match status" value="1"/>
</dbReference>
<dbReference type="SUPFAM" id="SSF50249">
    <property type="entry name" value="Nucleic acid-binding proteins"/>
    <property type="match status" value="1"/>
</dbReference>
<dbReference type="SUPFAM" id="SSF55666">
    <property type="entry name" value="Ribonuclease PH domain 2-like"/>
    <property type="match status" value="2"/>
</dbReference>
<dbReference type="SUPFAM" id="SSF54211">
    <property type="entry name" value="Ribosomal protein S5 domain 2-like"/>
    <property type="match status" value="2"/>
</dbReference>
<dbReference type="PROSITE" id="PS50084">
    <property type="entry name" value="KH_TYPE_1"/>
    <property type="match status" value="1"/>
</dbReference>
<dbReference type="PROSITE" id="PS50126">
    <property type="entry name" value="S1"/>
    <property type="match status" value="1"/>
</dbReference>
<sequence>MTMFNTIKREFQYGNQQVVIETGRIARQANSILVHMGGVTVLVAAVVKSDAKEGQNFFPLTVNYQEKMYAAGKIPGAYGKREGRASESETLTSRLIDRPIRPLFPEGYVNEIQITATVVSSDKTQSADIAALIGASAALAISDAPFNGPVAAARVGFINGEYVLNPTLEELKESDLDLVVAGTKSAVLMVESEAAELSEDQMLGAVLYGHQQQQIVIDNIASMAAEIGTAKQQYTAPVRNQTLETGMKEQFGTQVSDAYTITDKQARYSKLDEIKDAALAALAGDAESESYADTVSELKEIYNDLKYRTVRDNILSGKPRIDGRDLETVRALDVQVGVLPFTHGSALFTRGETQALVTTTLGNTRDVNMIDSLAGTIRDHFMLHYNFPHFSVGETGREGIPKRREIGHGRLARRGVQAMLPDSDRFPYVIRVVSEITESNGSSSMASVCGASLALMDAGVPIKAPVAGIAMGLVKEGERFAVLSDILGDEDHLGDMDFKVAGSKDGITALQMDIKIEGITPDIMEQALKQAHAGRIHILDAMNKVLPESRTEINAHAPNYAVIEINPDKIRDVIGKGGATIRQLTEETGAVIDIDDAGTIRIFGENKAATKAAIAKIEAITAEVEVGKTYEGTVARIVDFGAFINVLPNTDGLVHISQIADERVENVSDYLKEGQIVKVLVQDVDNRGRIKLTMKGIEQS</sequence>
<proteinExistence type="inferred from homology"/>
<keyword id="KW-0963">Cytoplasm</keyword>
<keyword id="KW-0460">Magnesium</keyword>
<keyword id="KW-0479">Metal-binding</keyword>
<keyword id="KW-0548">Nucleotidyltransferase</keyword>
<keyword id="KW-0694">RNA-binding</keyword>
<keyword id="KW-0808">Transferase</keyword>
<gene>
    <name evidence="1" type="primary">pnp</name>
    <name type="ordered locus">Pcryo_0080</name>
</gene>
<organism>
    <name type="scientific">Psychrobacter cryohalolentis (strain ATCC BAA-1226 / DSM 17306 / VKM B-2378 / K5)</name>
    <dbReference type="NCBI Taxonomy" id="335284"/>
    <lineage>
        <taxon>Bacteria</taxon>
        <taxon>Pseudomonadati</taxon>
        <taxon>Pseudomonadota</taxon>
        <taxon>Gammaproteobacteria</taxon>
        <taxon>Moraxellales</taxon>
        <taxon>Moraxellaceae</taxon>
        <taxon>Psychrobacter</taxon>
    </lineage>
</organism>
<name>PNP_PSYCK</name>
<protein>
    <recommendedName>
        <fullName evidence="1">Polyribonucleotide nucleotidyltransferase</fullName>
        <ecNumber evidence="1">2.7.7.8</ecNumber>
    </recommendedName>
    <alternativeName>
        <fullName evidence="1">Polynucleotide phosphorylase</fullName>
        <shortName evidence="1">PNPase</shortName>
    </alternativeName>
</protein>
<accession>Q1QEN9</accession>